<protein>
    <recommendedName>
        <fullName evidence="1">Cell division protein FtsB</fullName>
    </recommendedName>
</protein>
<comment type="function">
    <text evidence="1">Essential cell division protein. May link together the upstream cell division proteins, which are predominantly cytoplasmic, with the downstream cell division proteins, which are predominantly periplasmic.</text>
</comment>
<comment type="subunit">
    <text evidence="1">Part of a complex composed of FtsB, FtsL and FtsQ.</text>
</comment>
<comment type="subcellular location">
    <subcellularLocation>
        <location evidence="1">Cell inner membrane</location>
        <topology evidence="1">Single-pass type II membrane protein</topology>
    </subcellularLocation>
    <text evidence="1">Localizes to the division septum.</text>
</comment>
<comment type="similarity">
    <text evidence="1">Belongs to the FtsB family.</text>
</comment>
<evidence type="ECO:0000255" key="1">
    <source>
        <dbReference type="HAMAP-Rule" id="MF_00599"/>
    </source>
</evidence>
<keyword id="KW-0131">Cell cycle</keyword>
<keyword id="KW-0132">Cell division</keyword>
<keyword id="KW-0997">Cell inner membrane</keyword>
<keyword id="KW-1003">Cell membrane</keyword>
<keyword id="KW-0175">Coiled coil</keyword>
<keyword id="KW-0472">Membrane</keyword>
<keyword id="KW-0812">Transmembrane</keyword>
<keyword id="KW-1133">Transmembrane helix</keyword>
<name>FTSB_YERPN</name>
<sequence>MGKLTLLLLVLLGWLQYSLWLGKNGIHDFVRVKEDVAAQEANNSTLKARNDQLFAEIDDLNGGQEAIEERARNELGMIKPGESFYRLVPDQSRRNAGTPSTQNNAQ</sequence>
<feature type="chain" id="PRO_1000025741" description="Cell division protein FtsB">
    <location>
        <begin position="1"/>
        <end position="106"/>
    </location>
</feature>
<feature type="topological domain" description="Cytoplasmic" evidence="1">
    <location>
        <begin position="1"/>
        <end position="3"/>
    </location>
</feature>
<feature type="transmembrane region" description="Helical" evidence="1">
    <location>
        <begin position="4"/>
        <end position="21"/>
    </location>
</feature>
<feature type="topological domain" description="Periplasmic" evidence="1">
    <location>
        <begin position="22"/>
        <end position="106"/>
    </location>
</feature>
<feature type="coiled-coil region" evidence="1">
    <location>
        <begin position="31"/>
        <end position="62"/>
    </location>
</feature>
<proteinExistence type="inferred from homology"/>
<accession>Q1CLR7</accession>
<accession>C4GPS1</accession>
<organism>
    <name type="scientific">Yersinia pestis bv. Antiqua (strain Nepal516)</name>
    <dbReference type="NCBI Taxonomy" id="377628"/>
    <lineage>
        <taxon>Bacteria</taxon>
        <taxon>Pseudomonadati</taxon>
        <taxon>Pseudomonadota</taxon>
        <taxon>Gammaproteobacteria</taxon>
        <taxon>Enterobacterales</taxon>
        <taxon>Yersiniaceae</taxon>
        <taxon>Yersinia</taxon>
    </lineage>
</organism>
<reference key="1">
    <citation type="journal article" date="2006" name="J. Bacteriol.">
        <title>Complete genome sequence of Yersinia pestis strains Antiqua and Nepal516: evidence of gene reduction in an emerging pathogen.</title>
        <authorList>
            <person name="Chain P.S.G."/>
            <person name="Hu P."/>
            <person name="Malfatti S.A."/>
            <person name="Radnedge L."/>
            <person name="Larimer F."/>
            <person name="Vergez L.M."/>
            <person name="Worsham P."/>
            <person name="Chu M.C."/>
            <person name="Andersen G.L."/>
        </authorList>
    </citation>
    <scope>NUCLEOTIDE SEQUENCE [LARGE SCALE GENOMIC DNA]</scope>
    <source>
        <strain>Nepal516</strain>
    </source>
</reference>
<reference key="2">
    <citation type="submission" date="2009-04" db="EMBL/GenBank/DDBJ databases">
        <title>Yersinia pestis Nepal516A whole genome shotgun sequencing project.</title>
        <authorList>
            <person name="Plunkett G. III"/>
            <person name="Anderson B.D."/>
            <person name="Baumler D.J."/>
            <person name="Burland V."/>
            <person name="Cabot E.L."/>
            <person name="Glasner J.D."/>
            <person name="Mau B."/>
            <person name="Neeno-Eckwall E."/>
            <person name="Perna N.T."/>
            <person name="Munk A.C."/>
            <person name="Tapia R."/>
            <person name="Green L.D."/>
            <person name="Rogers Y.C."/>
            <person name="Detter J.C."/>
            <person name="Bruce D.C."/>
            <person name="Brettin T.S."/>
        </authorList>
    </citation>
    <scope>NUCLEOTIDE SEQUENCE [LARGE SCALE GENOMIC DNA]</scope>
    <source>
        <strain>Nepal516</strain>
    </source>
</reference>
<gene>
    <name evidence="1" type="primary">ftsB</name>
    <name type="ordered locus">YPN_0731</name>
    <name type="ORF">YP516_0779</name>
</gene>
<dbReference type="EMBL" id="CP000305">
    <property type="protein sequence ID" value="ABG17063.1"/>
    <property type="molecule type" value="Genomic_DNA"/>
</dbReference>
<dbReference type="EMBL" id="ACNQ01000007">
    <property type="protein sequence ID" value="EEO77927.1"/>
    <property type="molecule type" value="Genomic_DNA"/>
</dbReference>
<dbReference type="RefSeq" id="WP_002209390.1">
    <property type="nucleotide sequence ID" value="NZ_ACNQ01000007.1"/>
</dbReference>
<dbReference type="SMR" id="Q1CLR7"/>
<dbReference type="GeneID" id="57975347"/>
<dbReference type="KEGG" id="ypn:YPN_0731"/>
<dbReference type="HOGENOM" id="CLU_134863_5_2_6"/>
<dbReference type="Proteomes" id="UP000008936">
    <property type="component" value="Chromosome"/>
</dbReference>
<dbReference type="GO" id="GO:0032153">
    <property type="term" value="C:cell division site"/>
    <property type="evidence" value="ECO:0007669"/>
    <property type="project" value="UniProtKB-UniRule"/>
</dbReference>
<dbReference type="GO" id="GO:0030428">
    <property type="term" value="C:cell septum"/>
    <property type="evidence" value="ECO:0007669"/>
    <property type="project" value="TreeGrafter"/>
</dbReference>
<dbReference type="GO" id="GO:0005886">
    <property type="term" value="C:plasma membrane"/>
    <property type="evidence" value="ECO:0007669"/>
    <property type="project" value="UniProtKB-SubCell"/>
</dbReference>
<dbReference type="GO" id="GO:0043093">
    <property type="term" value="P:FtsZ-dependent cytokinesis"/>
    <property type="evidence" value="ECO:0007669"/>
    <property type="project" value="UniProtKB-UniRule"/>
</dbReference>
<dbReference type="Gene3D" id="1.20.5.400">
    <property type="match status" value="1"/>
</dbReference>
<dbReference type="HAMAP" id="MF_00599">
    <property type="entry name" value="FtsB"/>
    <property type="match status" value="1"/>
</dbReference>
<dbReference type="InterPro" id="IPR023081">
    <property type="entry name" value="Cell_div_FtsB"/>
</dbReference>
<dbReference type="InterPro" id="IPR007060">
    <property type="entry name" value="FtsL/DivIC"/>
</dbReference>
<dbReference type="NCBIfam" id="NF002058">
    <property type="entry name" value="PRK00888.1"/>
    <property type="match status" value="1"/>
</dbReference>
<dbReference type="PANTHER" id="PTHR37485">
    <property type="entry name" value="CELL DIVISION PROTEIN FTSB"/>
    <property type="match status" value="1"/>
</dbReference>
<dbReference type="PANTHER" id="PTHR37485:SF1">
    <property type="entry name" value="CELL DIVISION PROTEIN FTSB"/>
    <property type="match status" value="1"/>
</dbReference>
<dbReference type="Pfam" id="PF04977">
    <property type="entry name" value="DivIC"/>
    <property type="match status" value="1"/>
</dbReference>